<name>MIOS_MOUSE</name>
<keyword id="KW-0458">Lysosome</keyword>
<keyword id="KW-0472">Membrane</keyword>
<keyword id="KW-0479">Metal-binding</keyword>
<keyword id="KW-0597">Phosphoprotein</keyword>
<keyword id="KW-1185">Reference proteome</keyword>
<keyword id="KW-0677">Repeat</keyword>
<keyword id="KW-0853">WD repeat</keyword>
<keyword id="KW-0862">Zinc</keyword>
<keyword id="KW-0863">Zinc-finger</keyword>
<comment type="function">
    <text evidence="1 2">As a component of the GATOR2 complex, functions as an activator of the amino acid-sensing branch of the mTORC1 signaling pathway (PubMed:35022234). The GATOR2 complex indirectly activates mTORC1 through the inhibition of the GATOR1 subcomplex (By similarity). GATOR2 probably acts as an E3 ubiquitin-protein ligase toward GATOR1 (By similarity). In the presence of abundant amino acids, the GATOR2 complex mediates ubiquitination of the NPRL2 core component of the GATOR1 complex, leading to GATOR1 inactivation (By similarity). In the absence of amino acids, GATOR2 is inhibited, activating the GATOR1 complex (By similarity). Within the GATOR2 complex, MIOS is required to prevent autoubiquitination of WDR24, the catalytic subunit of the complex (By similarity). The GATOR2 complex is required for brain myelination (PubMed:35022234).</text>
</comment>
<comment type="activity regulation">
    <text evidence="1">The GATOR2 complex is negatively regulated by the upstream amino acid sensors CASTOR1 and SESN2, which sequester the GATOR2 complex in absence of amino acids. In the presence of abundant amino acids, GATOR2 is released from CASTOR1 and SESN2 and activated.</text>
</comment>
<comment type="subunit">
    <text evidence="1">Component of the GATOR2 subcomplex, composed of MIOS, SEC13, SEH1L, WDR24 and WDR59. The GATOR2 complex interacts with CASTOR1 and CASTOR2; the interaction is negatively regulated by arginine. CASTOR1 and CASTOR2 convey leucine availability via direct interaction with MIOS. The GATOR2 complex interacts with SESN1, SESN2 and SESN3; the interaction is negatively regulated by amino acids. Interacts with SAR1A and SAR1B; the interaction is direct, disrupted by leucine and mediates the interaction of SAR1A or SAR1B with the GATOR2 complex to negatively regulate the TORC1 signaling upon leucine deprivation (By similarity).</text>
</comment>
<comment type="subcellular location">
    <subcellularLocation>
        <location evidence="1">Lysosome membrane</location>
    </subcellularLocation>
</comment>
<comment type="tissue specificity">
    <text evidence="2">Widely expressed (PubMed:35022234). In brain, expressed in neurons and glia (oligodendrocytes and astrocytes), with more abundance in neurons (PubMed:35022234).</text>
</comment>
<comment type="disruption phenotype">
    <text evidence="2">Embryonic lethality around 9 dpc (PubMed:35022234). Conditional deletion in neural stem cells specifically impairs the formation of myelinating oligodendrocytes, thus brain myelination, without effecting the formation of neurons and astrocytes (PubMed:35022234).</text>
</comment>
<comment type="similarity">
    <text evidence="4">Belongs to the WD repeat mio family.</text>
</comment>
<feature type="chain" id="PRO_0000329405" description="GATOR2 complex protein MIOS">
    <location>
        <begin position="1"/>
        <end position="875"/>
    </location>
</feature>
<feature type="repeat" description="WD 1">
    <location>
        <begin position="58"/>
        <end position="100"/>
    </location>
</feature>
<feature type="repeat" description="WD 2">
    <location>
        <begin position="111"/>
        <end position="155"/>
    </location>
</feature>
<feature type="repeat" description="WD 3">
    <location>
        <begin position="182"/>
        <end position="221"/>
    </location>
</feature>
<feature type="repeat" description="WD 4">
    <location>
        <begin position="223"/>
        <end position="261"/>
    </location>
</feature>
<feature type="repeat" description="WD 5">
    <location>
        <begin position="265"/>
        <end position="306"/>
    </location>
</feature>
<feature type="repeat" description="WD 6">
    <location>
        <begin position="320"/>
        <end position="360"/>
    </location>
</feature>
<feature type="repeat" description="WD 7">
    <location>
        <begin position="395"/>
        <end position="437"/>
    </location>
</feature>
<feature type="zinc finger region" description="C4-type" evidence="1">
    <location>
        <begin position="735"/>
        <end position="781"/>
    </location>
</feature>
<feature type="zinc finger region" description="RING-type; atypical" evidence="1">
    <location>
        <begin position="782"/>
        <end position="863"/>
    </location>
</feature>
<feature type="binding site" evidence="1">
    <location>
        <position position="737"/>
    </location>
    <ligand>
        <name>Zn(2+)</name>
        <dbReference type="ChEBI" id="CHEBI:29105"/>
        <label>1</label>
    </ligand>
</feature>
<feature type="binding site" evidence="1">
    <location>
        <position position="740"/>
    </location>
    <ligand>
        <name>Zn(2+)</name>
        <dbReference type="ChEBI" id="CHEBI:29105"/>
        <label>1</label>
    </ligand>
</feature>
<feature type="binding site" evidence="1">
    <location>
        <position position="775"/>
    </location>
    <ligand>
        <name>Zn(2+)</name>
        <dbReference type="ChEBI" id="CHEBI:29105"/>
        <label>1</label>
    </ligand>
</feature>
<feature type="binding site" evidence="1">
    <location>
        <position position="778"/>
    </location>
    <ligand>
        <name>Zn(2+)</name>
        <dbReference type="ChEBI" id="CHEBI:29105"/>
        <label>1</label>
    </ligand>
</feature>
<feature type="binding site" evidence="1">
    <location>
        <position position="788"/>
    </location>
    <ligand>
        <name>Zn(2+)</name>
        <dbReference type="ChEBI" id="CHEBI:29105"/>
        <label>2</label>
    </ligand>
</feature>
<feature type="binding site" evidence="1">
    <location>
        <position position="827"/>
    </location>
    <ligand>
        <name>Zn(2+)</name>
        <dbReference type="ChEBI" id="CHEBI:29105"/>
        <label>3</label>
    </ligand>
</feature>
<feature type="binding site" evidence="1">
    <location>
        <position position="830"/>
    </location>
    <ligand>
        <name>Zn(2+)</name>
        <dbReference type="ChEBI" id="CHEBI:29105"/>
        <label>3</label>
    </ligand>
</feature>
<feature type="binding site" evidence="1">
    <location>
        <position position="830"/>
    </location>
    <ligand>
        <name>Zn(2+)</name>
        <dbReference type="ChEBI" id="CHEBI:29105"/>
        <label>4</label>
    </ligand>
</feature>
<feature type="binding site" evidence="1">
    <location>
        <position position="832"/>
    </location>
    <ligand>
        <name>Zn(2+)</name>
        <dbReference type="ChEBI" id="CHEBI:29105"/>
        <label>4</label>
    </ligand>
</feature>
<feature type="binding site" evidence="1">
    <location>
        <position position="835"/>
    </location>
    <ligand>
        <name>Zn(2+)</name>
        <dbReference type="ChEBI" id="CHEBI:29105"/>
        <label>2</label>
    </ligand>
</feature>
<feature type="binding site" evidence="1">
    <location>
        <position position="838"/>
    </location>
    <ligand>
        <name>Zn(2+)</name>
        <dbReference type="ChEBI" id="CHEBI:29105"/>
        <label>2</label>
    </ligand>
</feature>
<feature type="binding site" evidence="1">
    <location>
        <position position="849"/>
    </location>
    <ligand>
        <name>Zn(2+)</name>
        <dbReference type="ChEBI" id="CHEBI:29105"/>
        <label>4</label>
    </ligand>
</feature>
<feature type="binding site" evidence="1">
    <location>
        <position position="854"/>
    </location>
    <ligand>
        <name>Zn(2+)</name>
        <dbReference type="ChEBI" id="CHEBI:29105"/>
        <label>4</label>
    </ligand>
</feature>
<feature type="binding site" evidence="1">
    <location>
        <position position="858"/>
    </location>
    <ligand>
        <name>Zn(2+)</name>
        <dbReference type="ChEBI" id="CHEBI:29105"/>
        <label>3</label>
    </ligand>
</feature>
<feature type="modified residue" description="Phosphoserine" evidence="1">
    <location>
        <position position="759"/>
    </location>
</feature>
<feature type="modified residue" description="Phosphoserine" evidence="6">
    <location>
        <position position="766"/>
    </location>
</feature>
<feature type="sequence conflict" description="In Ref. 2; AAH20002." evidence="4" ref="2">
    <original>V</original>
    <variation>S</variation>
    <location>
        <position position="341"/>
    </location>
</feature>
<protein>
    <recommendedName>
        <fullName evidence="4">GATOR2 complex protein MIOS</fullName>
    </recommendedName>
</protein>
<reference key="1">
    <citation type="journal article" date="2009" name="PLoS Biol.">
        <title>Lineage-specific biology revealed by a finished genome assembly of the mouse.</title>
        <authorList>
            <person name="Church D.M."/>
            <person name="Goodstadt L."/>
            <person name="Hillier L.W."/>
            <person name="Zody M.C."/>
            <person name="Goldstein S."/>
            <person name="She X."/>
            <person name="Bult C.J."/>
            <person name="Agarwala R."/>
            <person name="Cherry J.L."/>
            <person name="DiCuccio M."/>
            <person name="Hlavina W."/>
            <person name="Kapustin Y."/>
            <person name="Meric P."/>
            <person name="Maglott D."/>
            <person name="Birtle Z."/>
            <person name="Marques A.C."/>
            <person name="Graves T."/>
            <person name="Zhou S."/>
            <person name="Teague B."/>
            <person name="Potamousis K."/>
            <person name="Churas C."/>
            <person name="Place M."/>
            <person name="Herschleb J."/>
            <person name="Runnheim R."/>
            <person name="Forrest D."/>
            <person name="Amos-Landgraf J."/>
            <person name="Schwartz D.C."/>
            <person name="Cheng Z."/>
            <person name="Lindblad-Toh K."/>
            <person name="Eichler E.E."/>
            <person name="Ponting C.P."/>
        </authorList>
    </citation>
    <scope>NUCLEOTIDE SEQUENCE [LARGE SCALE GENOMIC DNA]</scope>
    <source>
        <strain>C57BL/6J</strain>
    </source>
</reference>
<reference key="2">
    <citation type="journal article" date="2004" name="Genome Res.">
        <title>The status, quality, and expansion of the NIH full-length cDNA project: the Mammalian Gene Collection (MGC).</title>
        <authorList>
            <consortium name="The MGC Project Team"/>
        </authorList>
    </citation>
    <scope>NUCLEOTIDE SEQUENCE [LARGE SCALE MRNA]</scope>
    <source>
        <strain>FVB/N</strain>
        <tissue>Mammary tumor</tissue>
    </source>
</reference>
<reference key="3">
    <citation type="journal article" date="2010" name="Cell">
        <title>A tissue-specific atlas of mouse protein phosphorylation and expression.</title>
        <authorList>
            <person name="Huttlin E.L."/>
            <person name="Jedrychowski M.P."/>
            <person name="Elias J.E."/>
            <person name="Goswami T."/>
            <person name="Rad R."/>
            <person name="Beausoleil S.A."/>
            <person name="Villen J."/>
            <person name="Haas W."/>
            <person name="Sowa M.E."/>
            <person name="Gygi S.P."/>
        </authorList>
    </citation>
    <scope>PHOSPHORYLATION [LARGE SCALE ANALYSIS] AT SER-766</scope>
    <scope>IDENTIFICATION BY MASS SPECTROMETRY [LARGE SCALE ANALYSIS]</scope>
    <source>
        <tissue>Brain</tissue>
        <tissue>Brown adipose tissue</tissue>
        <tissue>Spleen</tissue>
    </source>
</reference>
<reference key="4">
    <citation type="journal article" date="2022" name="Proc. Natl. Acad. Sci. U.S.A.">
        <title>GATOR2 complex-mediated amino acid signaling regulates brain myelination.</title>
        <authorList>
            <person name="Yu Z."/>
            <person name="Yang Z."/>
            <person name="Ren G."/>
            <person name="Wang Y."/>
            <person name="Luo X."/>
            <person name="Zhu F."/>
            <person name="Yu S."/>
            <person name="Jia L."/>
            <person name="Chen M."/>
            <person name="Worley P.F."/>
            <person name="Xiao B."/>
        </authorList>
    </citation>
    <scope>FUNCTION</scope>
    <scope>DISRUPTION PHENOTYPE</scope>
    <scope>TISSUE SPECIFICITY</scope>
</reference>
<proteinExistence type="evidence at protein level"/>
<organism>
    <name type="scientific">Mus musculus</name>
    <name type="common">Mouse</name>
    <dbReference type="NCBI Taxonomy" id="10090"/>
    <lineage>
        <taxon>Eukaryota</taxon>
        <taxon>Metazoa</taxon>
        <taxon>Chordata</taxon>
        <taxon>Craniata</taxon>
        <taxon>Vertebrata</taxon>
        <taxon>Euteleostomi</taxon>
        <taxon>Mammalia</taxon>
        <taxon>Eutheria</taxon>
        <taxon>Euarchontoglires</taxon>
        <taxon>Glires</taxon>
        <taxon>Rodentia</taxon>
        <taxon>Myomorpha</taxon>
        <taxon>Muroidea</taxon>
        <taxon>Muridae</taxon>
        <taxon>Murinae</taxon>
        <taxon>Mus</taxon>
        <taxon>Mus</taxon>
    </lineage>
</organism>
<accession>Q8VE19</accession>
<accession>E9QM00</accession>
<gene>
    <name evidence="3 5" type="primary">Mios</name>
</gene>
<dbReference type="EMBL" id="AC158661">
    <property type="status" value="NOT_ANNOTATED_CDS"/>
    <property type="molecule type" value="Genomic_DNA"/>
</dbReference>
<dbReference type="EMBL" id="BC020002">
    <property type="protein sequence ID" value="AAH20002.1"/>
    <property type="molecule type" value="mRNA"/>
</dbReference>
<dbReference type="CCDS" id="CCDS39425.1"/>
<dbReference type="RefSeq" id="NP_663349.2">
    <property type="nucleotide sequence ID" value="NM_145374.2"/>
</dbReference>
<dbReference type="RefSeq" id="XP_006505149.1">
    <property type="nucleotide sequence ID" value="XM_006505086.3"/>
</dbReference>
<dbReference type="SMR" id="Q8VE19"/>
<dbReference type="BioGRID" id="232968">
    <property type="interactions" value="16"/>
</dbReference>
<dbReference type="FunCoup" id="Q8VE19">
    <property type="interactions" value="3255"/>
</dbReference>
<dbReference type="IntAct" id="Q8VE19">
    <property type="interactions" value="2"/>
</dbReference>
<dbReference type="MINT" id="Q8VE19"/>
<dbReference type="STRING" id="10090.ENSMUSP00000039301"/>
<dbReference type="iPTMnet" id="Q8VE19"/>
<dbReference type="PhosphoSitePlus" id="Q8VE19"/>
<dbReference type="SwissPalm" id="Q8VE19"/>
<dbReference type="jPOST" id="Q8VE19"/>
<dbReference type="PaxDb" id="10090-ENSMUSP00000039301"/>
<dbReference type="PeptideAtlas" id="Q8VE19"/>
<dbReference type="ProteomicsDB" id="290251"/>
<dbReference type="Pumba" id="Q8VE19"/>
<dbReference type="Antibodypedia" id="50650">
    <property type="antibodies" value="31 antibodies from 16 providers"/>
</dbReference>
<dbReference type="DNASU" id="252875"/>
<dbReference type="Ensembl" id="ENSMUST00000040017.8">
    <property type="protein sequence ID" value="ENSMUSP00000039301.8"/>
    <property type="gene ID" value="ENSMUSG00000042447.14"/>
</dbReference>
<dbReference type="GeneID" id="252875"/>
<dbReference type="KEGG" id="mmu:252875"/>
<dbReference type="UCSC" id="uc009axk.2">
    <property type="organism name" value="mouse"/>
</dbReference>
<dbReference type="AGR" id="MGI:2182066"/>
<dbReference type="CTD" id="54468"/>
<dbReference type="MGI" id="MGI:2182066">
    <property type="gene designation" value="Mios"/>
</dbReference>
<dbReference type="VEuPathDB" id="HostDB:ENSMUSG00000042447"/>
<dbReference type="eggNOG" id="KOG1008">
    <property type="taxonomic scope" value="Eukaryota"/>
</dbReference>
<dbReference type="GeneTree" id="ENSGT00390000015038"/>
<dbReference type="HOGENOM" id="CLU_005843_1_0_1"/>
<dbReference type="InParanoid" id="Q8VE19"/>
<dbReference type="OMA" id="YWIASYL"/>
<dbReference type="OrthoDB" id="341486at2759"/>
<dbReference type="PhylomeDB" id="Q8VE19"/>
<dbReference type="TreeFam" id="TF324074"/>
<dbReference type="Reactome" id="R-MMU-9639288">
    <property type="pathway name" value="Amino acids regulate mTORC1"/>
</dbReference>
<dbReference type="BioGRID-ORCS" id="252875">
    <property type="hits" value="13 hits in 77 CRISPR screens"/>
</dbReference>
<dbReference type="ChiTaRS" id="Mios">
    <property type="organism name" value="mouse"/>
</dbReference>
<dbReference type="PRO" id="PR:Q8VE19"/>
<dbReference type="Proteomes" id="UP000000589">
    <property type="component" value="Chromosome 6"/>
</dbReference>
<dbReference type="RNAct" id="Q8VE19">
    <property type="molecule type" value="protein"/>
</dbReference>
<dbReference type="Bgee" id="ENSMUSG00000042447">
    <property type="expression patterns" value="Expressed in rostral migratory stream and 245 other cell types or tissues"/>
</dbReference>
<dbReference type="GO" id="GO:0030054">
    <property type="term" value="C:cell junction"/>
    <property type="evidence" value="ECO:0007669"/>
    <property type="project" value="Ensembl"/>
</dbReference>
<dbReference type="GO" id="GO:0005829">
    <property type="term" value="C:cytosol"/>
    <property type="evidence" value="ECO:0007669"/>
    <property type="project" value="Ensembl"/>
</dbReference>
<dbReference type="GO" id="GO:0061700">
    <property type="term" value="C:GATOR2 complex"/>
    <property type="evidence" value="ECO:0000250"/>
    <property type="project" value="UniProtKB"/>
</dbReference>
<dbReference type="GO" id="GO:0005765">
    <property type="term" value="C:lysosomal membrane"/>
    <property type="evidence" value="ECO:0000250"/>
    <property type="project" value="UniProtKB"/>
</dbReference>
<dbReference type="GO" id="GO:0005654">
    <property type="term" value="C:nucleoplasm"/>
    <property type="evidence" value="ECO:0007669"/>
    <property type="project" value="Ensembl"/>
</dbReference>
<dbReference type="GO" id="GO:0008270">
    <property type="term" value="F:zinc ion binding"/>
    <property type="evidence" value="ECO:0007669"/>
    <property type="project" value="UniProtKB-KW"/>
</dbReference>
<dbReference type="GO" id="GO:0034198">
    <property type="term" value="P:cellular response to amino acid starvation"/>
    <property type="evidence" value="ECO:0007669"/>
    <property type="project" value="Ensembl"/>
</dbReference>
<dbReference type="GO" id="GO:0031669">
    <property type="term" value="P:cellular response to nutrient levels"/>
    <property type="evidence" value="ECO:0000250"/>
    <property type="project" value="UniProtKB"/>
</dbReference>
<dbReference type="GO" id="GO:0032289">
    <property type="term" value="P:central nervous system myelin formation"/>
    <property type="evidence" value="ECO:0000315"/>
    <property type="project" value="UniProtKB"/>
</dbReference>
<dbReference type="GO" id="GO:0048709">
    <property type="term" value="P:oligodendrocyte differentiation"/>
    <property type="evidence" value="ECO:0000315"/>
    <property type="project" value="UniProtKB"/>
</dbReference>
<dbReference type="GO" id="GO:0070444">
    <property type="term" value="P:oligodendrocyte progenitor proliferation"/>
    <property type="evidence" value="ECO:0000315"/>
    <property type="project" value="UniProtKB"/>
</dbReference>
<dbReference type="GO" id="GO:1904263">
    <property type="term" value="P:positive regulation of TORC1 signaling"/>
    <property type="evidence" value="ECO:0000315"/>
    <property type="project" value="UniProtKB"/>
</dbReference>
<dbReference type="GO" id="GO:0031503">
    <property type="term" value="P:protein-containing complex localization"/>
    <property type="evidence" value="ECO:0007669"/>
    <property type="project" value="Ensembl"/>
</dbReference>
<dbReference type="CDD" id="cd16691">
    <property type="entry name" value="mRING-H2-C3H3C2_Mio"/>
    <property type="match status" value="1"/>
</dbReference>
<dbReference type="FunFam" id="2.130.10.10:FF:000103">
    <property type="entry name" value="Meiosis regulator for oocyte development"/>
    <property type="match status" value="1"/>
</dbReference>
<dbReference type="Gene3D" id="2.130.10.10">
    <property type="entry name" value="YVTN repeat-like/Quinoprotein amine dehydrogenase"/>
    <property type="match status" value="1"/>
</dbReference>
<dbReference type="InterPro" id="IPR037593">
    <property type="entry name" value="MIOS/Sea4"/>
</dbReference>
<dbReference type="InterPro" id="IPR049092">
    <property type="entry name" value="MIOS_a-sol"/>
</dbReference>
<dbReference type="InterPro" id="IPR015943">
    <property type="entry name" value="WD40/YVTN_repeat-like_dom_sf"/>
</dbReference>
<dbReference type="InterPro" id="IPR036322">
    <property type="entry name" value="WD40_repeat_dom_sf"/>
</dbReference>
<dbReference type="InterPro" id="IPR001680">
    <property type="entry name" value="WD40_rpt"/>
</dbReference>
<dbReference type="InterPro" id="IPR031488">
    <property type="entry name" value="Zn_ribbon_mio"/>
</dbReference>
<dbReference type="PANTHER" id="PTHR16453:SF9">
    <property type="entry name" value="GATOR COMPLEX PROTEIN MIOS"/>
    <property type="match status" value="1"/>
</dbReference>
<dbReference type="PANTHER" id="PTHR16453">
    <property type="entry name" value="WD40 DOMAIN-CONTAINING PROTEIN MIO FAMILY MEMBER"/>
    <property type="match status" value="1"/>
</dbReference>
<dbReference type="Pfam" id="PF21719">
    <property type="entry name" value="MIOS_a-sol"/>
    <property type="match status" value="1"/>
</dbReference>
<dbReference type="Pfam" id="PF21720">
    <property type="entry name" value="MIOS_WD40"/>
    <property type="match status" value="1"/>
</dbReference>
<dbReference type="Pfam" id="PF17034">
    <property type="entry name" value="zinc_ribbon_16"/>
    <property type="match status" value="1"/>
</dbReference>
<dbReference type="SMART" id="SM00320">
    <property type="entry name" value="WD40"/>
    <property type="match status" value="4"/>
</dbReference>
<dbReference type="SUPFAM" id="SSF50978">
    <property type="entry name" value="WD40 repeat-like"/>
    <property type="match status" value="1"/>
</dbReference>
<sequence>MSGTKPDILWAPHQVDRFVVCDSELSLYHVESAVNSELKAGSLRLSEDSAATLLSINSDTPYMKCVAWYLNYDPECLLAVGQANGRVVLTSLGQDHNSKFKDLIGKEFVPKHARQCNTLAWNPLDSNWLAAGLDKHRADFSVLIWDICSKYTPDIVPMEKVRLSAGEAETTLLVTKPLYELGQNDASLSLCWLPRDQKLLLAGMHRNLAIFDLRNTSQKMFVNTKAVQGVTVDPYFHDRVASFYEGQVAIWDLRKFEKPVLTLTEQPKPLTKVAWCPTRTGLLATLTRDSNIIRLYDMQHTPTPIGDETEPTIIERSVQPCDNYIASFAWHPTSQNRMIVVTPNRTMSDFTVFERISLAWSPITSLMWACGRHLYECAEEESDNSLEKDIATKMRLRALSRYGLDTEQVWRNHILAGNEDPQLKSLWYTLHFMKQYTEDNDQKSPGNKGSLVYAGIKSIVKSSLGMVESSRHNWSGLDKQTDIQNLNEERILALQLCGWIKKGTDVDVGPFLNSLVQEGEWERAAAVALFNLDIRRAIQILNEGASSEKGDLNLNVVAMALSGYTDEKNSLWREMCSTLRLQLNNPYLCVMFAFLTSEAGAYDGVLYENKVAVRDRVAFACKFLGDAQLNKYIEKLTNEMKEAGNLEGILLTGLTKDGVDLMESYVDRTGDVQTASYCMLQGSPLDVLKDERVQYWIENYRNLLDAWRFWHKRAEFDIHRSKLDPSSKPLAQVFVSCNFCGKSISYSCSSVPHQGRGFSQYGVSGSPTKSKVTSCPGCRKPLPRCALCLINMGTPVSSCPGGSKSDEKVDLSKDKKLAQFNNWFTWCHNCRHGGHAGHMLSWFRDHAECPVSACTCKCMQLDTTGNLVPAETVQP</sequence>
<evidence type="ECO:0000250" key="1">
    <source>
        <dbReference type="UniProtKB" id="Q9NXC5"/>
    </source>
</evidence>
<evidence type="ECO:0000269" key="2">
    <source>
    </source>
</evidence>
<evidence type="ECO:0000303" key="3">
    <source>
    </source>
</evidence>
<evidence type="ECO:0000305" key="4"/>
<evidence type="ECO:0000312" key="5">
    <source>
        <dbReference type="MGI" id="MGI:2182066"/>
    </source>
</evidence>
<evidence type="ECO:0007744" key="6">
    <source>
    </source>
</evidence>